<organism>
    <name type="scientific">Homo sapiens</name>
    <name type="common">Human</name>
    <dbReference type="NCBI Taxonomy" id="9606"/>
    <lineage>
        <taxon>Eukaryota</taxon>
        <taxon>Metazoa</taxon>
        <taxon>Chordata</taxon>
        <taxon>Craniata</taxon>
        <taxon>Vertebrata</taxon>
        <taxon>Euteleostomi</taxon>
        <taxon>Mammalia</taxon>
        <taxon>Eutheria</taxon>
        <taxon>Euarchontoglires</taxon>
        <taxon>Primates</taxon>
        <taxon>Haplorrhini</taxon>
        <taxon>Catarrhini</taxon>
        <taxon>Hominidae</taxon>
        <taxon>Homo</taxon>
    </lineage>
</organism>
<reference key="1">
    <citation type="journal article" date="2004" name="Nat. Genet.">
        <title>Complete sequencing and characterization of 21,243 full-length human cDNAs.</title>
        <authorList>
            <person name="Ota T."/>
            <person name="Suzuki Y."/>
            <person name="Nishikawa T."/>
            <person name="Otsuki T."/>
            <person name="Sugiyama T."/>
            <person name="Irie R."/>
            <person name="Wakamatsu A."/>
            <person name="Hayashi K."/>
            <person name="Sato H."/>
            <person name="Nagai K."/>
            <person name="Kimura K."/>
            <person name="Makita H."/>
            <person name="Sekine M."/>
            <person name="Obayashi M."/>
            <person name="Nishi T."/>
            <person name="Shibahara T."/>
            <person name="Tanaka T."/>
            <person name="Ishii S."/>
            <person name="Yamamoto J."/>
            <person name="Saito K."/>
            <person name="Kawai Y."/>
            <person name="Isono Y."/>
            <person name="Nakamura Y."/>
            <person name="Nagahari K."/>
            <person name="Murakami K."/>
            <person name="Yasuda T."/>
            <person name="Iwayanagi T."/>
            <person name="Wagatsuma M."/>
            <person name="Shiratori A."/>
            <person name="Sudo H."/>
            <person name="Hosoiri T."/>
            <person name="Kaku Y."/>
            <person name="Kodaira H."/>
            <person name="Kondo H."/>
            <person name="Sugawara M."/>
            <person name="Takahashi M."/>
            <person name="Kanda K."/>
            <person name="Yokoi T."/>
            <person name="Furuya T."/>
            <person name="Kikkawa E."/>
            <person name="Omura Y."/>
            <person name="Abe K."/>
            <person name="Kamihara K."/>
            <person name="Katsuta N."/>
            <person name="Sato K."/>
            <person name="Tanikawa M."/>
            <person name="Yamazaki M."/>
            <person name="Ninomiya K."/>
            <person name="Ishibashi T."/>
            <person name="Yamashita H."/>
            <person name="Murakawa K."/>
            <person name="Fujimori K."/>
            <person name="Tanai H."/>
            <person name="Kimata M."/>
            <person name="Watanabe M."/>
            <person name="Hiraoka S."/>
            <person name="Chiba Y."/>
            <person name="Ishida S."/>
            <person name="Ono Y."/>
            <person name="Takiguchi S."/>
            <person name="Watanabe S."/>
            <person name="Yosida M."/>
            <person name="Hotuta T."/>
            <person name="Kusano J."/>
            <person name="Kanehori K."/>
            <person name="Takahashi-Fujii A."/>
            <person name="Hara H."/>
            <person name="Tanase T.-O."/>
            <person name="Nomura Y."/>
            <person name="Togiya S."/>
            <person name="Komai F."/>
            <person name="Hara R."/>
            <person name="Takeuchi K."/>
            <person name="Arita M."/>
            <person name="Imose N."/>
            <person name="Musashino K."/>
            <person name="Yuuki H."/>
            <person name="Oshima A."/>
            <person name="Sasaki N."/>
            <person name="Aotsuka S."/>
            <person name="Yoshikawa Y."/>
            <person name="Matsunawa H."/>
            <person name="Ichihara T."/>
            <person name="Shiohata N."/>
            <person name="Sano S."/>
            <person name="Moriya S."/>
            <person name="Momiyama H."/>
            <person name="Satoh N."/>
            <person name="Takami S."/>
            <person name="Terashima Y."/>
            <person name="Suzuki O."/>
            <person name="Nakagawa S."/>
            <person name="Senoh A."/>
            <person name="Mizoguchi H."/>
            <person name="Goto Y."/>
            <person name="Shimizu F."/>
            <person name="Wakebe H."/>
            <person name="Hishigaki H."/>
            <person name="Watanabe T."/>
            <person name="Sugiyama A."/>
            <person name="Takemoto M."/>
            <person name="Kawakami B."/>
            <person name="Yamazaki M."/>
            <person name="Watanabe K."/>
            <person name="Kumagai A."/>
            <person name="Itakura S."/>
            <person name="Fukuzumi Y."/>
            <person name="Fujimori Y."/>
            <person name="Komiyama M."/>
            <person name="Tashiro H."/>
            <person name="Tanigami A."/>
            <person name="Fujiwara T."/>
            <person name="Ono T."/>
            <person name="Yamada K."/>
            <person name="Fujii Y."/>
            <person name="Ozaki K."/>
            <person name="Hirao M."/>
            <person name="Ohmori Y."/>
            <person name="Kawabata A."/>
            <person name="Hikiji T."/>
            <person name="Kobatake N."/>
            <person name="Inagaki H."/>
            <person name="Ikema Y."/>
            <person name="Okamoto S."/>
            <person name="Okitani R."/>
            <person name="Kawakami T."/>
            <person name="Noguchi S."/>
            <person name="Itoh T."/>
            <person name="Shigeta K."/>
            <person name="Senba T."/>
            <person name="Matsumura K."/>
            <person name="Nakajima Y."/>
            <person name="Mizuno T."/>
            <person name="Morinaga M."/>
            <person name="Sasaki M."/>
            <person name="Togashi T."/>
            <person name="Oyama M."/>
            <person name="Hata H."/>
            <person name="Watanabe M."/>
            <person name="Komatsu T."/>
            <person name="Mizushima-Sugano J."/>
            <person name="Satoh T."/>
            <person name="Shirai Y."/>
            <person name="Takahashi Y."/>
            <person name="Nakagawa K."/>
            <person name="Okumura K."/>
            <person name="Nagase T."/>
            <person name="Nomura N."/>
            <person name="Kikuchi H."/>
            <person name="Masuho Y."/>
            <person name="Yamashita R."/>
            <person name="Nakai K."/>
            <person name="Yada T."/>
            <person name="Nakamura Y."/>
            <person name="Ohara O."/>
            <person name="Isogai T."/>
            <person name="Sugano S."/>
        </authorList>
    </citation>
    <scope>NUCLEOTIDE SEQUENCE [LARGE SCALE MRNA]</scope>
    <source>
        <tissue>Placenta</tissue>
    </source>
</reference>
<reference key="2">
    <citation type="journal article" date="2006" name="Nature">
        <title>DNA sequence of human chromosome 17 and analysis of rearrangement in the human lineage.</title>
        <authorList>
            <person name="Zody M.C."/>
            <person name="Garber M."/>
            <person name="Adams D.J."/>
            <person name="Sharpe T."/>
            <person name="Harrow J."/>
            <person name="Lupski J.R."/>
            <person name="Nicholson C."/>
            <person name="Searle S.M."/>
            <person name="Wilming L."/>
            <person name="Young S.K."/>
            <person name="Abouelleil A."/>
            <person name="Allen N.R."/>
            <person name="Bi W."/>
            <person name="Bloom T."/>
            <person name="Borowsky M.L."/>
            <person name="Bugalter B.E."/>
            <person name="Butler J."/>
            <person name="Chang J.L."/>
            <person name="Chen C.-K."/>
            <person name="Cook A."/>
            <person name="Corum B."/>
            <person name="Cuomo C.A."/>
            <person name="de Jong P.J."/>
            <person name="DeCaprio D."/>
            <person name="Dewar K."/>
            <person name="FitzGerald M."/>
            <person name="Gilbert J."/>
            <person name="Gibson R."/>
            <person name="Gnerre S."/>
            <person name="Goldstein S."/>
            <person name="Grafham D.V."/>
            <person name="Grocock R."/>
            <person name="Hafez N."/>
            <person name="Hagopian D.S."/>
            <person name="Hart E."/>
            <person name="Norman C.H."/>
            <person name="Humphray S."/>
            <person name="Jaffe D.B."/>
            <person name="Jones M."/>
            <person name="Kamal M."/>
            <person name="Khodiyar V.K."/>
            <person name="LaButti K."/>
            <person name="Laird G."/>
            <person name="Lehoczky J."/>
            <person name="Liu X."/>
            <person name="Lokyitsang T."/>
            <person name="Loveland J."/>
            <person name="Lui A."/>
            <person name="Macdonald P."/>
            <person name="Major J.E."/>
            <person name="Matthews L."/>
            <person name="Mauceli E."/>
            <person name="McCarroll S.A."/>
            <person name="Mihalev A.H."/>
            <person name="Mudge J."/>
            <person name="Nguyen C."/>
            <person name="Nicol R."/>
            <person name="O'Leary S.B."/>
            <person name="Osoegawa K."/>
            <person name="Schwartz D.C."/>
            <person name="Shaw-Smith C."/>
            <person name="Stankiewicz P."/>
            <person name="Steward C."/>
            <person name="Swarbreck D."/>
            <person name="Venkataraman V."/>
            <person name="Whittaker C.A."/>
            <person name="Yang X."/>
            <person name="Zimmer A.R."/>
            <person name="Bradley A."/>
            <person name="Hubbard T."/>
            <person name="Birren B.W."/>
            <person name="Rogers J."/>
            <person name="Lander E.S."/>
            <person name="Nusbaum C."/>
        </authorList>
    </citation>
    <scope>NUCLEOTIDE SEQUENCE [LARGE SCALE GENOMIC DNA]</scope>
</reference>
<reference key="3">
    <citation type="submission" date="2005-09" db="EMBL/GenBank/DDBJ databases">
        <authorList>
            <person name="Mural R.J."/>
            <person name="Istrail S."/>
            <person name="Sutton G.G."/>
            <person name="Florea L."/>
            <person name="Halpern A.L."/>
            <person name="Mobarry C.M."/>
            <person name="Lippert R."/>
            <person name="Walenz B."/>
            <person name="Shatkay H."/>
            <person name="Dew I."/>
            <person name="Miller J.R."/>
            <person name="Flanigan M.J."/>
            <person name="Edwards N.J."/>
            <person name="Bolanos R."/>
            <person name="Fasulo D."/>
            <person name="Halldorsson B.V."/>
            <person name="Hannenhalli S."/>
            <person name="Turner R."/>
            <person name="Yooseph S."/>
            <person name="Lu F."/>
            <person name="Nusskern D.R."/>
            <person name="Shue B.C."/>
            <person name="Zheng X.H."/>
            <person name="Zhong F."/>
            <person name="Delcher A.L."/>
            <person name="Huson D.H."/>
            <person name="Kravitz S.A."/>
            <person name="Mouchard L."/>
            <person name="Reinert K."/>
            <person name="Remington K.A."/>
            <person name="Clark A.G."/>
            <person name="Waterman M.S."/>
            <person name="Eichler E.E."/>
            <person name="Adams M.D."/>
            <person name="Hunkapiller M.W."/>
            <person name="Myers E.W."/>
            <person name="Venter J.C."/>
        </authorList>
    </citation>
    <scope>NUCLEOTIDE SEQUENCE [LARGE SCALE GENOMIC DNA]</scope>
</reference>
<reference key="4">
    <citation type="journal article" date="2004" name="Genome Res.">
        <title>The status, quality, and expansion of the NIH full-length cDNA project: the Mammalian Gene Collection (MGC).</title>
        <authorList>
            <consortium name="The MGC Project Team"/>
        </authorList>
    </citation>
    <scope>NUCLEOTIDE SEQUENCE [LARGE SCALE MRNA]</scope>
    <source>
        <tissue>Ovary</tissue>
    </source>
</reference>
<reference key="5">
    <citation type="journal article" date="2012" name="Proc. Natl. Acad. Sci. U.S.A.">
        <title>Tmem100, an ALK1 receptor signaling-dependent gene essential for arterial endothelium differentiation and vascular morphogenesis.</title>
        <authorList>
            <person name="Somekawa S."/>
            <person name="Imagawa K."/>
            <person name="Hayashi H."/>
            <person name="Sakabe M."/>
            <person name="Ioka T."/>
            <person name="Sato G.E."/>
            <person name="Inada K."/>
            <person name="Iwamoto T."/>
            <person name="Mori T."/>
            <person name="Uemura S."/>
            <person name="Nakagawa O."/>
            <person name="Saito Y."/>
        </authorList>
    </citation>
    <scope>SUBCELLULAR LOCATION</scope>
    <scope>TISSUE SPECIFICITY</scope>
    <scope>INDUCTION</scope>
</reference>
<reference key="6">
    <citation type="journal article" date="2013" name="Neuroscience">
        <title>Distribution of TMEM100 in the mouse and human gastrointestinal tract--a novel marker of enteric nerves.</title>
        <authorList>
            <person name="Eisenman S.T."/>
            <person name="Gibbons S.J."/>
            <person name="Singh R.D."/>
            <person name="Bernard C.E."/>
            <person name="Wu J."/>
            <person name="Sarr M.G."/>
            <person name="Kendrick M.L."/>
            <person name="Larson D.W."/>
            <person name="Dozois E.J."/>
            <person name="Shen K.R."/>
            <person name="Farrugia G."/>
        </authorList>
    </citation>
    <scope>SUBCELLULAR LOCATION</scope>
    <scope>TISSUE SPECIFICITY</scope>
</reference>
<gene>
    <name type="primary">TMEM100</name>
</gene>
<protein>
    <recommendedName>
        <fullName>Transmembrane protein 100</fullName>
    </recommendedName>
</protein>
<sequence>MTEEPIKEILGAPKAHMAATMEKSPKSEVVITTVPLVSEIQLMAATGGTELSCYRCIIPFAVVVFIAGIVVTAVAYSFNSHGSIISIFGLVVLSSGLFLLASSALCWKVRQRSKKAKRRESQTALVANQRSLFA</sequence>
<dbReference type="EMBL" id="AK001832">
    <property type="protein sequence ID" value="BAA91931.1"/>
    <property type="molecule type" value="mRNA"/>
</dbReference>
<dbReference type="EMBL" id="AC009837">
    <property type="status" value="NOT_ANNOTATED_CDS"/>
    <property type="molecule type" value="Genomic_DNA"/>
</dbReference>
<dbReference type="EMBL" id="CH471109">
    <property type="protein sequence ID" value="EAW94537.1"/>
    <property type="molecule type" value="Genomic_DNA"/>
</dbReference>
<dbReference type="EMBL" id="CH471109">
    <property type="protein sequence ID" value="EAW94538.1"/>
    <property type="molecule type" value="Genomic_DNA"/>
</dbReference>
<dbReference type="EMBL" id="CH471109">
    <property type="protein sequence ID" value="EAW94539.1"/>
    <property type="molecule type" value="Genomic_DNA"/>
</dbReference>
<dbReference type="EMBL" id="BC010128">
    <property type="protein sequence ID" value="AAH10128.1"/>
    <property type="molecule type" value="mRNA"/>
</dbReference>
<dbReference type="CCDS" id="CCDS11587.1"/>
<dbReference type="RefSeq" id="NP_001093110.1">
    <property type="nucleotide sequence ID" value="NM_001099640.2"/>
</dbReference>
<dbReference type="RefSeq" id="NP_060756.2">
    <property type="nucleotide sequence ID" value="NM_018286.3"/>
</dbReference>
<dbReference type="RefSeq" id="XP_016880303.1">
    <property type="nucleotide sequence ID" value="XM_017024814.1"/>
</dbReference>
<dbReference type="RefSeq" id="XP_016880304.1">
    <property type="nucleotide sequence ID" value="XM_017024815.2"/>
</dbReference>
<dbReference type="RefSeq" id="XP_016880305.1">
    <property type="nucleotide sequence ID" value="XM_017024816.2"/>
</dbReference>
<dbReference type="RefSeq" id="XP_047292297.1">
    <property type="nucleotide sequence ID" value="XM_047436341.1"/>
</dbReference>
<dbReference type="RefSeq" id="XP_047292298.1">
    <property type="nucleotide sequence ID" value="XM_047436342.1"/>
</dbReference>
<dbReference type="RefSeq" id="XP_047292299.1">
    <property type="nucleotide sequence ID" value="XM_047436343.1"/>
</dbReference>
<dbReference type="RefSeq" id="XP_054172576.1">
    <property type="nucleotide sequence ID" value="XM_054316601.1"/>
</dbReference>
<dbReference type="RefSeq" id="XP_054172577.1">
    <property type="nucleotide sequence ID" value="XM_054316602.1"/>
</dbReference>
<dbReference type="RefSeq" id="XP_054172578.1">
    <property type="nucleotide sequence ID" value="XM_054316603.1"/>
</dbReference>
<dbReference type="RefSeq" id="XP_054172579.1">
    <property type="nucleotide sequence ID" value="XM_054316604.1"/>
</dbReference>
<dbReference type="SMR" id="Q9NV29"/>
<dbReference type="BioGRID" id="120561">
    <property type="interactions" value="34"/>
</dbReference>
<dbReference type="FunCoup" id="Q9NV29">
    <property type="interactions" value="153"/>
</dbReference>
<dbReference type="IntAct" id="Q9NV29">
    <property type="interactions" value="33"/>
</dbReference>
<dbReference type="MINT" id="Q9NV29"/>
<dbReference type="STRING" id="9606.ENSP00000465638"/>
<dbReference type="TCDB" id="8.A.64.1.8">
    <property type="family name" value="the phosphoinositide-interacting protein (pirt) family"/>
</dbReference>
<dbReference type="iPTMnet" id="Q9NV29"/>
<dbReference type="PhosphoSitePlus" id="Q9NV29"/>
<dbReference type="SwissPalm" id="Q9NV29"/>
<dbReference type="BioMuta" id="TMEM100"/>
<dbReference type="DMDM" id="109895209"/>
<dbReference type="jPOST" id="Q9NV29"/>
<dbReference type="MassIVE" id="Q9NV29"/>
<dbReference type="PaxDb" id="9606-ENSP00000465638"/>
<dbReference type="PeptideAtlas" id="Q9NV29"/>
<dbReference type="ProteomicsDB" id="46810"/>
<dbReference type="ProteomicsDB" id="82741"/>
<dbReference type="Antibodypedia" id="56967">
    <property type="antibodies" value="173 antibodies from 21 providers"/>
</dbReference>
<dbReference type="DNASU" id="55273"/>
<dbReference type="Ensembl" id="ENST00000424486.3">
    <property type="protein sequence ID" value="ENSP00000395328.2"/>
    <property type="gene ID" value="ENSG00000166292.12"/>
</dbReference>
<dbReference type="Ensembl" id="ENST00000575734.5">
    <property type="protein sequence ID" value="ENSP00000465638.1"/>
    <property type="gene ID" value="ENSG00000166292.12"/>
</dbReference>
<dbReference type="GeneID" id="55273"/>
<dbReference type="KEGG" id="hsa:55273"/>
<dbReference type="MANE-Select" id="ENST00000424486.3">
    <property type="protein sequence ID" value="ENSP00000395328.2"/>
    <property type="RefSeq nucleotide sequence ID" value="NM_018286.3"/>
    <property type="RefSeq protein sequence ID" value="NP_060756.2"/>
</dbReference>
<dbReference type="UCSC" id="uc002iuj.5">
    <property type="organism name" value="human"/>
</dbReference>
<dbReference type="AGR" id="HGNC:25607"/>
<dbReference type="CTD" id="55273"/>
<dbReference type="DisGeNET" id="55273"/>
<dbReference type="GeneCards" id="TMEM100"/>
<dbReference type="HGNC" id="HGNC:25607">
    <property type="gene designation" value="TMEM100"/>
</dbReference>
<dbReference type="HPA" id="ENSG00000166292">
    <property type="expression patterns" value="Tissue enhanced (lung)"/>
</dbReference>
<dbReference type="MIM" id="616334">
    <property type="type" value="gene"/>
</dbReference>
<dbReference type="neXtProt" id="NX_Q9NV29"/>
<dbReference type="OpenTargets" id="ENSG00000166292"/>
<dbReference type="PharmGKB" id="PA142670749"/>
<dbReference type="VEuPathDB" id="HostDB:ENSG00000166292"/>
<dbReference type="eggNOG" id="ENOG502RZCB">
    <property type="taxonomic scope" value="Eukaryota"/>
</dbReference>
<dbReference type="GeneTree" id="ENSGT00940000154322"/>
<dbReference type="InParanoid" id="Q9NV29"/>
<dbReference type="OMA" id="PMTMEKS"/>
<dbReference type="OrthoDB" id="9893370at2759"/>
<dbReference type="PAN-GO" id="Q9NV29">
    <property type="GO annotations" value="2 GO annotations based on evolutionary models"/>
</dbReference>
<dbReference type="PhylomeDB" id="Q9NV29"/>
<dbReference type="TreeFam" id="TF332068"/>
<dbReference type="PathwayCommons" id="Q9NV29"/>
<dbReference type="SignaLink" id="Q9NV29"/>
<dbReference type="BioGRID-ORCS" id="55273">
    <property type="hits" value="15 hits in 1148 CRISPR screens"/>
</dbReference>
<dbReference type="ChiTaRS" id="TMEM100">
    <property type="organism name" value="human"/>
</dbReference>
<dbReference type="GenomeRNAi" id="55273"/>
<dbReference type="Pharos" id="Q9NV29">
    <property type="development level" value="Tbio"/>
</dbReference>
<dbReference type="PRO" id="PR:Q9NV29"/>
<dbReference type="Proteomes" id="UP000005640">
    <property type="component" value="Chromosome 17"/>
</dbReference>
<dbReference type="RNAct" id="Q9NV29">
    <property type="molecule type" value="protein"/>
</dbReference>
<dbReference type="Bgee" id="ENSG00000166292">
    <property type="expression patterns" value="Expressed in right lung and 167 other cell types or tissues"/>
</dbReference>
<dbReference type="ExpressionAtlas" id="Q9NV29">
    <property type="expression patterns" value="baseline and differential"/>
</dbReference>
<dbReference type="GO" id="GO:0005783">
    <property type="term" value="C:endoplasmic reticulum"/>
    <property type="evidence" value="ECO:0000314"/>
    <property type="project" value="UniProtKB"/>
</dbReference>
<dbReference type="GO" id="GO:0043204">
    <property type="term" value="C:perikaryon"/>
    <property type="evidence" value="ECO:0000314"/>
    <property type="project" value="UniProtKB"/>
</dbReference>
<dbReference type="GO" id="GO:0048471">
    <property type="term" value="C:perinuclear region of cytoplasm"/>
    <property type="evidence" value="ECO:0000314"/>
    <property type="project" value="UniProtKB"/>
</dbReference>
<dbReference type="GO" id="GO:0005886">
    <property type="term" value="C:plasma membrane"/>
    <property type="evidence" value="ECO:0000314"/>
    <property type="project" value="UniProtKB"/>
</dbReference>
<dbReference type="GO" id="GO:0001525">
    <property type="term" value="P:angiogenesis"/>
    <property type="evidence" value="ECO:0007669"/>
    <property type="project" value="Ensembl"/>
</dbReference>
<dbReference type="GO" id="GO:0060842">
    <property type="term" value="P:arterial endothelial cell differentiation"/>
    <property type="evidence" value="ECO:0007669"/>
    <property type="project" value="Ensembl"/>
</dbReference>
<dbReference type="GO" id="GO:0030509">
    <property type="term" value="P:BMP signaling pathway"/>
    <property type="evidence" value="ECO:0000314"/>
    <property type="project" value="UniProtKB"/>
</dbReference>
<dbReference type="GO" id="GO:0071773">
    <property type="term" value="P:cellular response to BMP stimulus"/>
    <property type="evidence" value="ECO:0000314"/>
    <property type="project" value="UniProtKB"/>
</dbReference>
<dbReference type="GO" id="GO:0003198">
    <property type="term" value="P:epithelial to mesenchymal transition involved in endocardial cushion formation"/>
    <property type="evidence" value="ECO:0007669"/>
    <property type="project" value="Ensembl"/>
</dbReference>
<dbReference type="GO" id="GO:0001701">
    <property type="term" value="P:in utero embryonic development"/>
    <property type="evidence" value="ECO:0007669"/>
    <property type="project" value="Ensembl"/>
</dbReference>
<dbReference type="GO" id="GO:0007219">
    <property type="term" value="P:Notch signaling pathway"/>
    <property type="evidence" value="ECO:0007669"/>
    <property type="project" value="Ensembl"/>
</dbReference>
<dbReference type="GO" id="GO:0045603">
    <property type="term" value="P:positive regulation of endothelial cell differentiation"/>
    <property type="evidence" value="ECO:0000250"/>
    <property type="project" value="UniProtKB"/>
</dbReference>
<dbReference type="GO" id="GO:0051897">
    <property type="term" value="P:positive regulation of phosphatidylinositol 3-kinase/protein kinase B signal transduction"/>
    <property type="evidence" value="ECO:0007669"/>
    <property type="project" value="Ensembl"/>
</dbReference>
<dbReference type="GO" id="GO:2001214">
    <property type="term" value="P:positive regulation of vasculogenesis"/>
    <property type="evidence" value="ECO:0000250"/>
    <property type="project" value="UniProtKB"/>
</dbReference>
<dbReference type="GO" id="GO:0050848">
    <property type="term" value="P:regulation of calcium-mediated signaling"/>
    <property type="evidence" value="ECO:0007669"/>
    <property type="project" value="Ensembl"/>
</dbReference>
<dbReference type="GO" id="GO:0051930">
    <property type="term" value="P:regulation of sensory perception of pain"/>
    <property type="evidence" value="ECO:0000250"/>
    <property type="project" value="UniProtKB"/>
</dbReference>
<dbReference type="GO" id="GO:0001570">
    <property type="term" value="P:vasculogenesis"/>
    <property type="evidence" value="ECO:0007669"/>
    <property type="project" value="Ensembl"/>
</dbReference>
<dbReference type="InterPro" id="IPR032536">
    <property type="entry name" value="TMEM100"/>
</dbReference>
<dbReference type="PANTHER" id="PTHR16100">
    <property type="entry name" value="PHOSPHOINOSITIDE-INTERACTING PROTEIN FAMILY MEMBER"/>
    <property type="match status" value="1"/>
</dbReference>
<dbReference type="PANTHER" id="PTHR16100:SF5">
    <property type="entry name" value="TRANSMEMBRANE PROTEIN 100"/>
    <property type="match status" value="1"/>
</dbReference>
<dbReference type="Pfam" id="PF16311">
    <property type="entry name" value="TMEM100"/>
    <property type="match status" value="1"/>
</dbReference>
<name>TM100_HUMAN</name>
<comment type="function">
    <text evidence="1">Plays a role during embryonic arterial endothelium differentiation and vascular morphogenesis through the ACVRL1 receptor-dependent signaling pathway upon stimulation by bone morphogenetic proteins, such as GDF2/BMP9 and BMP10. Involved in the regulation of nociception, acting as a modulator of the interaction between TRPA1 and TRPV1, two molecular sensors and mediators of pain signals in dorsal root ganglia (DRG) neurons. Mechanistically, it weakens their interaction, thereby releasing the inhibition of TRPA1 by TRPV1 and increasing the single-channel open probability of the TRPA1-TRPV1 complex.</text>
</comment>
<comment type="subunit">
    <text evidence="1">Interacts (via C-terminus) with TRPA1 and TRPV1 (By similarity). Interacts with TASOR (By similarity).</text>
</comment>
<comment type="interaction">
    <interactant intactId="EBI-8644968">
        <id>Q9NV29</id>
    </interactant>
    <interactant intactId="EBI-13059134">
        <id>Q13520</id>
        <label>AQP6</label>
    </interactant>
    <organismsDiffer>false</organismsDiffer>
    <experiments>3</experiments>
</comment>
<comment type="interaction">
    <interactant intactId="EBI-8644968">
        <id>Q9NV29</id>
    </interactant>
    <interactant intactId="EBI-2808286">
        <id>Q2TAC2</id>
        <label>CCDC57</label>
    </interactant>
    <organismsDiffer>false</organismsDiffer>
    <experiments>3</experiments>
</comment>
<comment type="interaction">
    <interactant intactId="EBI-8644968">
        <id>Q9NV29</id>
    </interactant>
    <interactant intactId="EBI-10961624">
        <id>Q2TAC2-2</id>
        <label>CCDC57</label>
    </interactant>
    <organismsDiffer>false</organismsDiffer>
    <experiments>3</experiments>
</comment>
<comment type="interaction">
    <interactant intactId="EBI-8644968">
        <id>Q9NV29</id>
    </interactant>
    <interactant intactId="EBI-3906571">
        <id>P20138</id>
        <label>CD33</label>
    </interactant>
    <organismsDiffer>false</organismsDiffer>
    <experiments>3</experiments>
</comment>
<comment type="interaction">
    <interactant intactId="EBI-8644968">
        <id>Q9NV29</id>
    </interactant>
    <interactant intactId="EBI-740744">
        <id>O95471</id>
        <label>CLDN7</label>
    </interactant>
    <organismsDiffer>false</organismsDiffer>
    <experiments>3</experiments>
</comment>
<comment type="interaction">
    <interactant intactId="EBI-8644968">
        <id>Q9NV29</id>
    </interactant>
    <interactant intactId="EBI-372265">
        <id>P21964</id>
        <label>COMT</label>
    </interactant>
    <organismsDiffer>false</organismsDiffer>
    <experiments>3</experiments>
</comment>
<comment type="interaction">
    <interactant intactId="EBI-8644968">
        <id>Q9NV29</id>
    </interactant>
    <interactant intactId="EBI-3915253">
        <id>Q15125</id>
        <label>EBP</label>
    </interactant>
    <organismsDiffer>false</organismsDiffer>
    <experiments>3</experiments>
</comment>
<comment type="interaction">
    <interactant intactId="EBI-8644968">
        <id>Q9NV29</id>
    </interactant>
    <interactant intactId="EBI-781551">
        <id>Q9Y282</id>
        <label>ERGIC3</label>
    </interactant>
    <organismsDiffer>false</organismsDiffer>
    <experiments>3</experiments>
</comment>
<comment type="interaction">
    <interactant intactId="EBI-8644968">
        <id>Q9NV29</id>
    </interactant>
    <interactant intactId="EBI-742600">
        <id>Q9Y624</id>
        <label>F11R</label>
    </interactant>
    <organismsDiffer>false</organismsDiffer>
    <experiments>3</experiments>
</comment>
<comment type="interaction">
    <interactant intactId="EBI-8644968">
        <id>Q9NV29</id>
    </interactant>
    <interactant intactId="EBI-18304435">
        <id>Q5JX71</id>
        <label>FAM209A</label>
    </interactant>
    <organismsDiffer>false</organismsDiffer>
    <experiments>3</experiments>
</comment>
<comment type="interaction">
    <interactant intactId="EBI-8644968">
        <id>Q9NV29</id>
    </interactant>
    <interactant intactId="EBI-12142257">
        <id>Q8TBE3</id>
        <label>FNDC9</label>
    </interactant>
    <organismsDiffer>false</organismsDiffer>
    <experiments>3</experiments>
</comment>
<comment type="interaction">
    <interactant intactId="EBI-8644968">
        <id>Q9NV29</id>
    </interactant>
    <interactant intactId="EBI-17458373">
        <id>P48165</id>
        <label>GJA8</label>
    </interactant>
    <organismsDiffer>false</organismsDiffer>
    <experiments>3</experiments>
</comment>
<comment type="interaction">
    <interactant intactId="EBI-8644968">
        <id>Q9NV29</id>
    </interactant>
    <interactant intactId="EBI-13345167">
        <id>Q8TDT2</id>
        <label>GPR152</label>
    </interactant>
    <organismsDiffer>false</organismsDiffer>
    <experiments>3</experiments>
</comment>
<comment type="interaction">
    <interactant intactId="EBI-8644968">
        <id>Q9NV29</id>
    </interactant>
    <interactant intactId="EBI-18053395">
        <id>Q7Z5P4</id>
        <label>HSD17B13</label>
    </interactant>
    <organismsDiffer>false</organismsDiffer>
    <experiments>3</experiments>
</comment>
<comment type="interaction">
    <interactant intactId="EBI-8644968">
        <id>Q9NV29</id>
    </interactant>
    <interactant intactId="EBI-1030755">
        <id>P15260</id>
        <label>IFNGR1</label>
    </interactant>
    <organismsDiffer>false</organismsDiffer>
    <experiments>3</experiments>
</comment>
<comment type="interaction">
    <interactant intactId="EBI-8644968">
        <id>Q9NV29</id>
    </interactant>
    <interactant intactId="EBI-10266796">
        <id>Q8N5M9</id>
        <label>JAGN1</label>
    </interactant>
    <organismsDiffer>false</organismsDiffer>
    <experiments>3</experiments>
</comment>
<comment type="interaction">
    <interactant intactId="EBI-8644968">
        <id>Q9NV29</id>
    </interactant>
    <interactant intactId="EBI-2820517">
        <id>Q8TAF8</id>
        <label>LHFPL5</label>
    </interactant>
    <organismsDiffer>false</organismsDiffer>
    <experiments>3</experiments>
</comment>
<comment type="interaction">
    <interactant intactId="EBI-8644968">
        <id>Q9NV29</id>
    </interactant>
    <interactant intactId="EBI-748397">
        <id>P50222</id>
        <label>MEOX2</label>
    </interactant>
    <organismsDiffer>false</organismsDiffer>
    <experiments>3</experiments>
</comment>
<comment type="interaction">
    <interactant intactId="EBI-8644968">
        <id>Q9NV29</id>
    </interactant>
    <interactant intactId="EBI-1042703">
        <id>Q8N1F7</id>
        <label>NUP93</label>
    </interactant>
    <organismsDiffer>false</organismsDiffer>
    <experiments>3</experiments>
</comment>
<comment type="interaction">
    <interactant intactId="EBI-8644968">
        <id>Q9NV29</id>
    </interactant>
    <interactant intactId="EBI-1644241">
        <id>Q9H902</id>
        <label>REEP1</label>
    </interactant>
    <organismsDiffer>false</organismsDiffer>
    <experiments>3</experiments>
</comment>
<comment type="interaction">
    <interactant intactId="EBI-8644968">
        <id>Q9NV29</id>
    </interactant>
    <interactant intactId="EBI-10192441">
        <id>Q86VR2</id>
        <label>RETREG3</label>
    </interactant>
    <organismsDiffer>false</organismsDiffer>
    <experiments>3</experiments>
</comment>
<comment type="interaction">
    <interactant intactId="EBI-8644968">
        <id>Q9NV29</id>
    </interactant>
    <interactant intactId="EBI-1056589">
        <id>Q96TC7</id>
        <label>RMDN3</label>
    </interactant>
    <organismsDiffer>false</organismsDiffer>
    <experiments>3</experiments>
</comment>
<comment type="interaction">
    <interactant intactId="EBI-8644968">
        <id>Q9NV29</id>
    </interactant>
    <interactant intactId="EBI-2466594">
        <id>Q6ZMZ0</id>
        <label>RNF19B</label>
    </interactant>
    <organismsDiffer>false</organismsDiffer>
    <experiments>3</experiments>
</comment>
<comment type="interaction">
    <interactant intactId="EBI-8644968">
        <id>Q9NV29</id>
    </interactant>
    <interactant intactId="EBI-13918058">
        <id>O14863</id>
        <label>SLC30A4</label>
    </interactant>
    <organismsDiffer>false</organismsDiffer>
    <experiments>3</experiments>
</comment>
<comment type="interaction">
    <interactant intactId="EBI-8644968">
        <id>Q9NV29</id>
    </interactant>
    <interactant intactId="EBI-18915901">
        <id>Q9BS91</id>
        <label>SLC35A5</label>
    </interactant>
    <organismsDiffer>false</organismsDiffer>
    <experiments>3</experiments>
</comment>
<comment type="interaction">
    <interactant intactId="EBI-8644968">
        <id>Q9NV29</id>
    </interactant>
    <interactant intactId="EBI-2800345">
        <id>Q86WV6</id>
        <label>STING1</label>
    </interactant>
    <organismsDiffer>false</organismsDiffer>
    <experiments>3</experiments>
</comment>
<comment type="interaction">
    <interactant intactId="EBI-8644968">
        <id>Q9NV29</id>
    </interactant>
    <interactant intactId="EBI-712466">
        <id>Q16623</id>
        <label>STX1A</label>
    </interactant>
    <organismsDiffer>false</organismsDiffer>
    <experiments>3</experiments>
</comment>
<comment type="interaction">
    <interactant intactId="EBI-8644968">
        <id>Q9NV29</id>
    </interactant>
    <interactant intactId="EBI-19763514">
        <id>Q8N3G9</id>
        <label>TMEM130</label>
    </interactant>
    <organismsDiffer>false</organismsDiffer>
    <experiments>3</experiments>
</comment>
<comment type="interaction">
    <interactant intactId="EBI-8644968">
        <id>Q9NV29</id>
    </interactant>
    <interactant intactId="EBI-17684533">
        <id>Q9NRX6</id>
        <label>TMEM167B</label>
    </interactant>
    <organismsDiffer>false</organismsDiffer>
    <experiments>3</experiments>
</comment>
<comment type="interaction">
    <interactant intactId="EBI-8644968">
        <id>Q9NV29</id>
    </interactant>
    <interactant intactId="EBI-18178701">
        <id>Q4KMG9</id>
        <label>TMEM52B</label>
    </interactant>
    <organismsDiffer>false</organismsDiffer>
    <experiments>3</experiments>
</comment>
<comment type="interaction">
    <interactant intactId="EBI-8644968">
        <id>Q9NV29</id>
    </interactant>
    <interactant intactId="EBI-8649725">
        <id>Q9BSE2</id>
        <label>TMEM79</label>
    </interactant>
    <organismsDiffer>false</organismsDiffer>
    <experiments>3</experiments>
</comment>
<comment type="interaction">
    <interactant intactId="EBI-8644968">
        <id>Q9NV29</id>
    </interactant>
    <interactant intactId="EBI-11742770">
        <id>Q96HE8</id>
        <label>TMEM80</label>
    </interactant>
    <organismsDiffer>false</organismsDiffer>
    <experiments>3</experiments>
</comment>
<comment type="interaction">
    <interactant intactId="EBI-8644968">
        <id>Q9NV29</id>
    </interactant>
    <interactant intactId="EBI-744988">
        <id>Q9H7M9</id>
        <label>VSIR</label>
    </interactant>
    <organismsDiffer>false</organismsDiffer>
    <experiments>3</experiments>
</comment>
<comment type="subcellular location">
    <subcellularLocation>
        <location>Cell membrane</location>
        <topology>Multi-pass membrane protein</topology>
    </subcellularLocation>
    <subcellularLocation>
        <location evidence="5">Membrane</location>
        <topology evidence="5">Multi-pass membrane protein</topology>
    </subcellularLocation>
    <subcellularLocation>
        <location>Perikaryon</location>
    </subcellularLocation>
    <subcellularLocation>
        <location>Cytoplasm</location>
        <location>Perinuclear region</location>
    </subcellularLocation>
    <subcellularLocation>
        <location>Endoplasmic reticulum</location>
    </subcellularLocation>
    <text>Colocalized with HSPA5 in the endoplasmic reticulum (ER). Enriched in ER microsome. Colocalized with BMP4 in neural cell bodies and neural fibers of the enteric nervous system.</text>
</comment>
<comment type="tissue specificity">
    <text evidence="3 4">Expressed in neurons of the myenteric and submucosal plexuses in the gastric body, jejunum and proximal colon. Expressed in arterial endothelial cells and neurons of the central nervous system and peripheral nervous system. Expressed in umbilical artery endothelial cells (at protein level).</text>
</comment>
<comment type="induction">
    <text evidence="3">Up-regulated by GDF2/BMP9 and BMP10 (at protein level).</text>
</comment>
<comment type="sequence caution" evidence="5">
    <conflict type="erroneous gene model prediction">
        <sequence resource="EMBL" id="AC009837"/>
    </conflict>
</comment>
<keyword id="KW-1003">Cell membrane</keyword>
<keyword id="KW-0963">Cytoplasm</keyword>
<keyword id="KW-0217">Developmental protein</keyword>
<keyword id="KW-0221">Differentiation</keyword>
<keyword id="KW-0256">Endoplasmic reticulum</keyword>
<keyword id="KW-0472">Membrane</keyword>
<keyword id="KW-0597">Phosphoprotein</keyword>
<keyword id="KW-1267">Proteomics identification</keyword>
<keyword id="KW-1185">Reference proteome</keyword>
<keyword id="KW-0812">Transmembrane</keyword>
<keyword id="KW-1133">Transmembrane helix</keyword>
<feature type="chain" id="PRO_0000240846" description="Transmembrane protein 100">
    <location>
        <begin position="1"/>
        <end position="134"/>
    </location>
</feature>
<feature type="transmembrane region" description="Helical" evidence="2">
    <location>
        <begin position="56"/>
        <end position="76"/>
    </location>
</feature>
<feature type="transmembrane region" description="Helical" evidence="2">
    <location>
        <begin position="84"/>
        <end position="104"/>
    </location>
</feature>
<feature type="modified residue" description="Phosphoserine" evidence="1">
    <location>
        <position position="121"/>
    </location>
</feature>
<feature type="sequence conflict" description="In Ref. 1; BAA91931." evidence="5" ref="1">
    <original>F</original>
    <variation>S</variation>
    <location>
        <position position="133"/>
    </location>
</feature>
<proteinExistence type="evidence at protein level"/>
<accession>Q9NV29</accession>
<accession>D3DTY7</accession>
<accession>I3L214</accession>
<accession>Q96FZ0</accession>
<evidence type="ECO:0000250" key="1">
    <source>
        <dbReference type="UniProtKB" id="Q9CQG9"/>
    </source>
</evidence>
<evidence type="ECO:0000255" key="2"/>
<evidence type="ECO:0000269" key="3">
    <source>
    </source>
</evidence>
<evidence type="ECO:0000269" key="4">
    <source>
    </source>
</evidence>
<evidence type="ECO:0000305" key="5"/>